<name>SFSA_THEAC</name>
<accession>Q9HK14</accession>
<gene>
    <name evidence="1" type="primary">sfsA</name>
    <name type="ordered locus">Ta0795</name>
</gene>
<evidence type="ECO:0000255" key="1">
    <source>
        <dbReference type="HAMAP-Rule" id="MF_00095"/>
    </source>
</evidence>
<evidence type="ECO:0000305" key="2"/>
<feature type="chain" id="PRO_0000152330" description="Sugar fermentation stimulation protein homolog">
    <location>
        <begin position="1"/>
        <end position="222"/>
    </location>
</feature>
<keyword id="KW-1185">Reference proteome</keyword>
<protein>
    <recommendedName>
        <fullName evidence="1">Sugar fermentation stimulation protein homolog</fullName>
    </recommendedName>
</protein>
<sequence>MRFEGLIGARILKRINRFAVQIDVEGRTELAHLHDPGRLLEIVYPGNEVLVRRTDGPKLKWRIEFGKINGRYVLIDSGLHSDIARRFLPEGAVPEVRVGRKRIDFRYGDDYIEVKGCTLMANGIAMFPDAPTKRGLEHLKTLETLASSGYRSHVMMIITRDDVRCFYPNFETDPKFAEAFLRLVPAYVKAHFLTFGFDGLYLRYAGSIGLCADVGHGTNGRL</sequence>
<organism>
    <name type="scientific">Thermoplasma acidophilum (strain ATCC 25905 / DSM 1728 / JCM 9062 / NBRC 15155 / AMRC-C165)</name>
    <dbReference type="NCBI Taxonomy" id="273075"/>
    <lineage>
        <taxon>Archaea</taxon>
        <taxon>Methanobacteriati</taxon>
        <taxon>Thermoplasmatota</taxon>
        <taxon>Thermoplasmata</taxon>
        <taxon>Thermoplasmatales</taxon>
        <taxon>Thermoplasmataceae</taxon>
        <taxon>Thermoplasma</taxon>
    </lineage>
</organism>
<comment type="similarity">
    <text evidence="1">Belongs to the SfsA family.</text>
</comment>
<comment type="sequence caution" evidence="2">
    <conflict type="erroneous initiation">
        <sequence resource="EMBL-CDS" id="CAC11925"/>
    </conflict>
</comment>
<proteinExistence type="inferred from homology"/>
<dbReference type="EMBL" id="AL445065">
    <property type="protein sequence ID" value="CAC11925.1"/>
    <property type="status" value="ALT_INIT"/>
    <property type="molecule type" value="Genomic_DNA"/>
</dbReference>
<dbReference type="SMR" id="Q9HK14"/>
<dbReference type="STRING" id="273075.gene:9572010"/>
<dbReference type="PaxDb" id="273075-Ta0795"/>
<dbReference type="EnsemblBacteria" id="CAC11925">
    <property type="protein sequence ID" value="CAC11925"/>
    <property type="gene ID" value="CAC11925"/>
</dbReference>
<dbReference type="KEGG" id="tac:Ta0795"/>
<dbReference type="eggNOG" id="arCOG04115">
    <property type="taxonomic scope" value="Archaea"/>
</dbReference>
<dbReference type="HOGENOM" id="CLU_052299_1_0_2"/>
<dbReference type="InParanoid" id="Q9HK14"/>
<dbReference type="Proteomes" id="UP000001024">
    <property type="component" value="Chromosome"/>
</dbReference>
<dbReference type="GO" id="GO:0003677">
    <property type="term" value="F:DNA binding"/>
    <property type="evidence" value="ECO:0007669"/>
    <property type="project" value="InterPro"/>
</dbReference>
<dbReference type="CDD" id="cd22357">
    <property type="entry name" value="SfsA-like"/>
    <property type="match status" value="1"/>
</dbReference>
<dbReference type="Gene3D" id="2.40.50.580">
    <property type="match status" value="1"/>
</dbReference>
<dbReference type="Gene3D" id="3.40.1350.60">
    <property type="match status" value="1"/>
</dbReference>
<dbReference type="HAMAP" id="MF_00095">
    <property type="entry name" value="SfsA"/>
    <property type="match status" value="1"/>
</dbReference>
<dbReference type="InterPro" id="IPR005224">
    <property type="entry name" value="SfsA"/>
</dbReference>
<dbReference type="InterPro" id="IPR040452">
    <property type="entry name" value="SfsA_C"/>
</dbReference>
<dbReference type="InterPro" id="IPR041465">
    <property type="entry name" value="SfsA_N"/>
</dbReference>
<dbReference type="NCBIfam" id="TIGR00230">
    <property type="entry name" value="sfsA"/>
    <property type="match status" value="1"/>
</dbReference>
<dbReference type="PANTHER" id="PTHR30545">
    <property type="entry name" value="SUGAR FERMENTATION STIMULATION PROTEIN A"/>
    <property type="match status" value="1"/>
</dbReference>
<dbReference type="PANTHER" id="PTHR30545:SF2">
    <property type="entry name" value="SUGAR FERMENTATION STIMULATION PROTEIN A"/>
    <property type="match status" value="1"/>
</dbReference>
<dbReference type="Pfam" id="PF03749">
    <property type="entry name" value="SfsA"/>
    <property type="match status" value="1"/>
</dbReference>
<dbReference type="Pfam" id="PF17746">
    <property type="entry name" value="SfsA_N"/>
    <property type="match status" value="1"/>
</dbReference>
<reference key="1">
    <citation type="journal article" date="2000" name="Nature">
        <title>The genome sequence of the thermoacidophilic scavenger Thermoplasma acidophilum.</title>
        <authorList>
            <person name="Ruepp A."/>
            <person name="Graml W."/>
            <person name="Santos-Martinez M.-L."/>
            <person name="Koretke K.K."/>
            <person name="Volker C."/>
            <person name="Mewes H.-W."/>
            <person name="Frishman D."/>
            <person name="Stocker S."/>
            <person name="Lupas A.N."/>
            <person name="Baumeister W."/>
        </authorList>
    </citation>
    <scope>NUCLEOTIDE SEQUENCE [LARGE SCALE GENOMIC DNA]</scope>
    <source>
        <strain>ATCC 25905 / DSM 1728 / JCM 9062 / NBRC 15155 / AMRC-C165</strain>
    </source>
</reference>